<accession>B2VJU9</accession>
<keyword id="KW-0067">ATP-binding</keyword>
<keyword id="KW-0963">Cytoplasm</keyword>
<keyword id="KW-0210">Decarboxylase</keyword>
<keyword id="KW-0312">Gluconeogenesis</keyword>
<keyword id="KW-0456">Lyase</keyword>
<keyword id="KW-0464">Manganese</keyword>
<keyword id="KW-0479">Metal-binding</keyword>
<keyword id="KW-0547">Nucleotide-binding</keyword>
<keyword id="KW-1185">Reference proteome</keyword>
<organism>
    <name type="scientific">Erwinia tasmaniensis (strain DSM 17950 / CFBP 7177 / CIP 109463 / NCPPB 4357 / Et1/99)</name>
    <dbReference type="NCBI Taxonomy" id="465817"/>
    <lineage>
        <taxon>Bacteria</taxon>
        <taxon>Pseudomonadati</taxon>
        <taxon>Pseudomonadota</taxon>
        <taxon>Gammaproteobacteria</taxon>
        <taxon>Enterobacterales</taxon>
        <taxon>Erwiniaceae</taxon>
        <taxon>Erwinia</taxon>
    </lineage>
</organism>
<gene>
    <name evidence="1" type="primary">pckA</name>
    <name type="ordered locus">ETA_32170</name>
</gene>
<reference key="1">
    <citation type="journal article" date="2008" name="Environ. Microbiol.">
        <title>The genome of Erwinia tasmaniensis strain Et1/99, a non-pathogenic bacterium in the genus Erwinia.</title>
        <authorList>
            <person name="Kube M."/>
            <person name="Migdoll A.M."/>
            <person name="Mueller I."/>
            <person name="Kuhl H."/>
            <person name="Beck A."/>
            <person name="Reinhardt R."/>
            <person name="Geider K."/>
        </authorList>
    </citation>
    <scope>NUCLEOTIDE SEQUENCE [LARGE SCALE GENOMIC DNA]</scope>
    <source>
        <strain>DSM 17950 / CFBP 7177 / CIP 109463 / NCPPB 4357 / Et1/99</strain>
    </source>
</reference>
<evidence type="ECO:0000255" key="1">
    <source>
        <dbReference type="HAMAP-Rule" id="MF_00453"/>
    </source>
</evidence>
<feature type="chain" id="PRO_1000125068" description="Phosphoenolpyruvate carboxykinase (ATP)">
    <location>
        <begin position="1"/>
        <end position="539"/>
    </location>
</feature>
<feature type="binding site" evidence="1">
    <location>
        <position position="64"/>
    </location>
    <ligand>
        <name>substrate</name>
    </ligand>
</feature>
<feature type="binding site" evidence="1">
    <location>
        <position position="206"/>
    </location>
    <ligand>
        <name>substrate</name>
    </ligand>
</feature>
<feature type="binding site" evidence="1">
    <location>
        <position position="212"/>
    </location>
    <ligand>
        <name>ATP</name>
        <dbReference type="ChEBI" id="CHEBI:30616"/>
    </ligand>
</feature>
<feature type="binding site" evidence="1">
    <location>
        <position position="212"/>
    </location>
    <ligand>
        <name>Mn(2+)</name>
        <dbReference type="ChEBI" id="CHEBI:29035"/>
    </ligand>
</feature>
<feature type="binding site" evidence="1">
    <location>
        <position position="212"/>
    </location>
    <ligand>
        <name>substrate</name>
    </ligand>
</feature>
<feature type="binding site" evidence="1">
    <location>
        <position position="231"/>
    </location>
    <ligand>
        <name>ATP</name>
        <dbReference type="ChEBI" id="CHEBI:30616"/>
    </ligand>
</feature>
<feature type="binding site" evidence="1">
    <location>
        <position position="231"/>
    </location>
    <ligand>
        <name>Mn(2+)</name>
        <dbReference type="ChEBI" id="CHEBI:29035"/>
    </ligand>
</feature>
<feature type="binding site" evidence="1">
    <location>
        <begin position="247"/>
        <end position="255"/>
    </location>
    <ligand>
        <name>ATP</name>
        <dbReference type="ChEBI" id="CHEBI:30616"/>
    </ligand>
</feature>
<feature type="binding site" evidence="1">
    <location>
        <position position="268"/>
    </location>
    <ligand>
        <name>Mn(2+)</name>
        <dbReference type="ChEBI" id="CHEBI:29035"/>
    </ligand>
</feature>
<feature type="binding site" evidence="1">
    <location>
        <position position="296"/>
    </location>
    <ligand>
        <name>ATP</name>
        <dbReference type="ChEBI" id="CHEBI:30616"/>
    </ligand>
</feature>
<feature type="binding site" evidence="1">
    <location>
        <position position="332"/>
    </location>
    <ligand>
        <name>ATP</name>
        <dbReference type="ChEBI" id="CHEBI:30616"/>
    </ligand>
</feature>
<feature type="binding site" evidence="1">
    <location>
        <position position="332"/>
    </location>
    <ligand>
        <name>substrate</name>
    </ligand>
</feature>
<feature type="binding site" evidence="1">
    <location>
        <begin position="448"/>
        <end position="449"/>
    </location>
    <ligand>
        <name>ATP</name>
        <dbReference type="ChEBI" id="CHEBI:30616"/>
    </ligand>
</feature>
<feature type="binding site" evidence="1">
    <location>
        <position position="454"/>
    </location>
    <ligand>
        <name>ATP</name>
        <dbReference type="ChEBI" id="CHEBI:30616"/>
    </ligand>
</feature>
<name>PCKA_ERWT9</name>
<sequence>MGNNGLTPQELVAYGITDTVEVVHNPDYDMLFKEETQPGLAGYERGIVTESGAVAVDTGIFTGRSPKDKYLVRDETTRDTLWWSDQGKGKNDNQPLTQETWQSLKSLVTRQLSGKRLFVVDTWCGANPDSRLSVRFITEVAWQAHFVKNMFIRPDDASLASFKPDFVVMNGAKCTNPDWQSQGLHSENFVAFNLTEKIQLIGGTWYGGEMKKGLFAIMNYLLPLKGIASMHCSANVGADGDVAVFFGLSGTGKTTLSTDPQRQLIGDDEHGWDDDGVFNFEGGCYAKTIKLSPQAEPEIYQAIRRDALLENVVVRHDGSVDYDDGSKTENTRVSYPIYHIDNIVKPVSKAGHAKKVIFLTADAFGVLPPVSRLTADQTQYHFLSGFTAKLAGTERGVTEPTPTFSACFGAAFLTLHPTQYAEVLVKRMQAAGAEAWLVNTGWNGSGKRISLKETRAIINAILSGEIAHAQTSTLPIFNLEMPDSLPGVDGKLLDPRNSYPSEAAWEEKARALAQRFITNFDKFTDTPAGEALVQAGPKL</sequence>
<proteinExistence type="inferred from homology"/>
<dbReference type="EC" id="4.1.1.49" evidence="1"/>
<dbReference type="EMBL" id="CU468135">
    <property type="protein sequence ID" value="CAO98263.1"/>
    <property type="molecule type" value="Genomic_DNA"/>
</dbReference>
<dbReference type="RefSeq" id="WP_012442893.1">
    <property type="nucleotide sequence ID" value="NC_010694.1"/>
</dbReference>
<dbReference type="SMR" id="B2VJU9"/>
<dbReference type="STRING" id="465817.ETA_32170"/>
<dbReference type="KEGG" id="eta:ETA_32170"/>
<dbReference type="eggNOG" id="COG1866">
    <property type="taxonomic scope" value="Bacteria"/>
</dbReference>
<dbReference type="HOGENOM" id="CLU_018247_0_1_6"/>
<dbReference type="OrthoDB" id="9806325at2"/>
<dbReference type="UniPathway" id="UPA00138"/>
<dbReference type="Proteomes" id="UP000001726">
    <property type="component" value="Chromosome"/>
</dbReference>
<dbReference type="GO" id="GO:0005829">
    <property type="term" value="C:cytosol"/>
    <property type="evidence" value="ECO:0007669"/>
    <property type="project" value="TreeGrafter"/>
</dbReference>
<dbReference type="GO" id="GO:0005524">
    <property type="term" value="F:ATP binding"/>
    <property type="evidence" value="ECO:0007669"/>
    <property type="project" value="UniProtKB-UniRule"/>
</dbReference>
<dbReference type="GO" id="GO:0046872">
    <property type="term" value="F:metal ion binding"/>
    <property type="evidence" value="ECO:0007669"/>
    <property type="project" value="UniProtKB-KW"/>
</dbReference>
<dbReference type="GO" id="GO:0004612">
    <property type="term" value="F:phosphoenolpyruvate carboxykinase (ATP) activity"/>
    <property type="evidence" value="ECO:0007669"/>
    <property type="project" value="UniProtKB-UniRule"/>
</dbReference>
<dbReference type="GO" id="GO:0006094">
    <property type="term" value="P:gluconeogenesis"/>
    <property type="evidence" value="ECO:0007669"/>
    <property type="project" value="UniProtKB-UniRule"/>
</dbReference>
<dbReference type="CDD" id="cd00484">
    <property type="entry name" value="PEPCK_ATP"/>
    <property type="match status" value="1"/>
</dbReference>
<dbReference type="FunFam" id="2.170.8.10:FF:000001">
    <property type="entry name" value="Phosphoenolpyruvate carboxykinase (ATP)"/>
    <property type="match status" value="1"/>
</dbReference>
<dbReference type="FunFam" id="3.40.449.10:FF:000001">
    <property type="entry name" value="Phosphoenolpyruvate carboxykinase (ATP)"/>
    <property type="match status" value="1"/>
</dbReference>
<dbReference type="Gene3D" id="3.90.228.20">
    <property type="match status" value="1"/>
</dbReference>
<dbReference type="Gene3D" id="3.40.449.10">
    <property type="entry name" value="Phosphoenolpyruvate Carboxykinase, domain 1"/>
    <property type="match status" value="1"/>
</dbReference>
<dbReference type="Gene3D" id="2.170.8.10">
    <property type="entry name" value="Phosphoenolpyruvate Carboxykinase, domain 2"/>
    <property type="match status" value="1"/>
</dbReference>
<dbReference type="HAMAP" id="MF_00453">
    <property type="entry name" value="PEPCK_ATP"/>
    <property type="match status" value="1"/>
</dbReference>
<dbReference type="InterPro" id="IPR001272">
    <property type="entry name" value="PEP_carboxykinase_ATP"/>
</dbReference>
<dbReference type="InterPro" id="IPR013035">
    <property type="entry name" value="PEP_carboxykinase_C"/>
</dbReference>
<dbReference type="InterPro" id="IPR008210">
    <property type="entry name" value="PEP_carboxykinase_N"/>
</dbReference>
<dbReference type="InterPro" id="IPR015994">
    <property type="entry name" value="PEPCK_ATP_CS"/>
</dbReference>
<dbReference type="NCBIfam" id="TIGR00224">
    <property type="entry name" value="pckA"/>
    <property type="match status" value="1"/>
</dbReference>
<dbReference type="NCBIfam" id="NF006819">
    <property type="entry name" value="PRK09344.1-1"/>
    <property type="match status" value="1"/>
</dbReference>
<dbReference type="NCBIfam" id="NF006820">
    <property type="entry name" value="PRK09344.1-2"/>
    <property type="match status" value="1"/>
</dbReference>
<dbReference type="NCBIfam" id="NF006821">
    <property type="entry name" value="PRK09344.1-3"/>
    <property type="match status" value="1"/>
</dbReference>
<dbReference type="PANTHER" id="PTHR30031:SF0">
    <property type="entry name" value="PHOSPHOENOLPYRUVATE CARBOXYKINASE (ATP)"/>
    <property type="match status" value="1"/>
</dbReference>
<dbReference type="PANTHER" id="PTHR30031">
    <property type="entry name" value="PHOSPHOENOLPYRUVATE CARBOXYKINASE ATP"/>
    <property type="match status" value="1"/>
</dbReference>
<dbReference type="Pfam" id="PF01293">
    <property type="entry name" value="PEPCK_ATP"/>
    <property type="match status" value="1"/>
</dbReference>
<dbReference type="PIRSF" id="PIRSF006294">
    <property type="entry name" value="PEP_crbxkin"/>
    <property type="match status" value="1"/>
</dbReference>
<dbReference type="SUPFAM" id="SSF68923">
    <property type="entry name" value="PEP carboxykinase N-terminal domain"/>
    <property type="match status" value="1"/>
</dbReference>
<dbReference type="SUPFAM" id="SSF53795">
    <property type="entry name" value="PEP carboxykinase-like"/>
    <property type="match status" value="1"/>
</dbReference>
<dbReference type="PROSITE" id="PS00532">
    <property type="entry name" value="PEPCK_ATP"/>
    <property type="match status" value="1"/>
</dbReference>
<protein>
    <recommendedName>
        <fullName evidence="1">Phosphoenolpyruvate carboxykinase (ATP)</fullName>
        <shortName evidence="1">PCK</shortName>
        <shortName evidence="1">PEP carboxykinase</shortName>
        <shortName evidence="1">PEPCK</shortName>
        <ecNumber evidence="1">4.1.1.49</ecNumber>
    </recommendedName>
</protein>
<comment type="function">
    <text evidence="1">Involved in the gluconeogenesis. Catalyzes the conversion of oxaloacetate (OAA) to phosphoenolpyruvate (PEP) through direct phosphoryl transfer between the nucleoside triphosphate and OAA.</text>
</comment>
<comment type="catalytic activity">
    <reaction evidence="1">
        <text>oxaloacetate + ATP = phosphoenolpyruvate + ADP + CO2</text>
        <dbReference type="Rhea" id="RHEA:18617"/>
        <dbReference type="ChEBI" id="CHEBI:16452"/>
        <dbReference type="ChEBI" id="CHEBI:16526"/>
        <dbReference type="ChEBI" id="CHEBI:30616"/>
        <dbReference type="ChEBI" id="CHEBI:58702"/>
        <dbReference type="ChEBI" id="CHEBI:456216"/>
        <dbReference type="EC" id="4.1.1.49"/>
    </reaction>
</comment>
<comment type="cofactor">
    <cofactor evidence="1">
        <name>Mn(2+)</name>
        <dbReference type="ChEBI" id="CHEBI:29035"/>
    </cofactor>
    <text evidence="1">Binds 1 Mn(2+) ion per subunit.</text>
</comment>
<comment type="pathway">
    <text evidence="1">Carbohydrate biosynthesis; gluconeogenesis.</text>
</comment>
<comment type="subunit">
    <text evidence="1">Monomer.</text>
</comment>
<comment type="subcellular location">
    <subcellularLocation>
        <location evidence="1">Cytoplasm</location>
    </subcellularLocation>
</comment>
<comment type="similarity">
    <text evidence="1">Belongs to the phosphoenolpyruvate carboxykinase (ATP) family.</text>
</comment>